<feature type="chain" id="PRO_0000083613" description="3-isopropylmalate dehydrogenase">
    <location>
        <begin position="1"/>
        <end position="368"/>
    </location>
</feature>
<feature type="binding site" evidence="1">
    <location>
        <begin position="79"/>
        <end position="91"/>
    </location>
    <ligand>
        <name>NAD(+)</name>
        <dbReference type="ChEBI" id="CHEBI:57540"/>
    </ligand>
</feature>
<feature type="binding site" evidence="1">
    <location>
        <position position="98"/>
    </location>
    <ligand>
        <name>substrate</name>
    </ligand>
</feature>
<feature type="binding site" evidence="1">
    <location>
        <position position="108"/>
    </location>
    <ligand>
        <name>substrate</name>
    </ligand>
</feature>
<feature type="binding site" evidence="1">
    <location>
        <position position="137"/>
    </location>
    <ligand>
        <name>substrate</name>
    </ligand>
</feature>
<feature type="binding site" evidence="1">
    <location>
        <position position="226"/>
    </location>
    <ligand>
        <name>Mg(2+)</name>
        <dbReference type="ChEBI" id="CHEBI:18420"/>
    </ligand>
</feature>
<feature type="binding site" evidence="1">
    <location>
        <position position="226"/>
    </location>
    <ligand>
        <name>substrate</name>
    </ligand>
</feature>
<feature type="binding site" evidence="1">
    <location>
        <position position="251"/>
    </location>
    <ligand>
        <name>Mg(2+)</name>
        <dbReference type="ChEBI" id="CHEBI:18420"/>
    </ligand>
</feature>
<feature type="binding site" evidence="1">
    <location>
        <position position="255"/>
    </location>
    <ligand>
        <name>Mg(2+)</name>
        <dbReference type="ChEBI" id="CHEBI:18420"/>
    </ligand>
</feature>
<feature type="binding site" evidence="1">
    <location>
        <begin position="291"/>
        <end position="303"/>
    </location>
    <ligand>
        <name>NAD(+)</name>
        <dbReference type="ChEBI" id="CHEBI:57540"/>
    </ligand>
</feature>
<feature type="site" description="Important for catalysis" evidence="1">
    <location>
        <position position="144"/>
    </location>
</feature>
<feature type="site" description="Important for catalysis" evidence="1">
    <location>
        <position position="193"/>
    </location>
</feature>
<feature type="sequence conflict" description="In Ref. 1; AAD10616." evidence="2" ref="1">
    <original>G</original>
    <variation>C</variation>
    <location>
        <position position="37"/>
    </location>
</feature>
<feature type="sequence conflict" description="In Ref. 1; AAD10616." evidence="2" ref="1">
    <original>P</original>
    <variation>S</variation>
    <location>
        <position position="184"/>
    </location>
</feature>
<feature type="sequence conflict" description="In Ref. 1; AAD10616." evidence="2" ref="1">
    <original>F</original>
    <variation>C</variation>
    <location>
        <position position="215"/>
    </location>
</feature>
<feature type="sequence conflict" description="In Ref. 1; AAD10616." evidence="2" ref="1">
    <original>L</original>
    <variation>W</variation>
    <location>
        <position position="272"/>
    </location>
</feature>
<feature type="sequence conflict" description="In Ref. 1; AAD10616." evidence="2" ref="1">
    <original>G</original>
    <variation>V</variation>
    <location>
        <position position="280"/>
    </location>
</feature>
<feature type="sequence conflict" description="In Ref. 1; AAD10616." evidence="2" ref="1">
    <original>G</original>
    <variation>C</variation>
    <location>
        <position position="306"/>
    </location>
</feature>
<accession>P34738</accession>
<accession>Q7RVH7</accession>
<organism>
    <name type="scientific">Neurospora crassa (strain ATCC 24698 / 74-OR23-1A / CBS 708.71 / DSM 1257 / FGSC 987)</name>
    <dbReference type="NCBI Taxonomy" id="367110"/>
    <lineage>
        <taxon>Eukaryota</taxon>
        <taxon>Fungi</taxon>
        <taxon>Dikarya</taxon>
        <taxon>Ascomycota</taxon>
        <taxon>Pezizomycotina</taxon>
        <taxon>Sordariomycetes</taxon>
        <taxon>Sordariomycetidae</taxon>
        <taxon>Sordariales</taxon>
        <taxon>Sordariaceae</taxon>
        <taxon>Neurospora</taxon>
    </lineage>
</organism>
<comment type="function">
    <text>Catalyzes the oxidation of 3-carboxy-2-hydroxy-4-methylpentanoate (3-isopropylmalate) to 3-carboxy-4-methyl-2-oxopentanoate. The product decarboxylates to 4-methyl-2 oxopentanoate.</text>
</comment>
<comment type="catalytic activity">
    <reaction>
        <text>(2R,3S)-3-isopropylmalate + NAD(+) = 4-methyl-2-oxopentanoate + CO2 + NADH</text>
        <dbReference type="Rhea" id="RHEA:32271"/>
        <dbReference type="ChEBI" id="CHEBI:16526"/>
        <dbReference type="ChEBI" id="CHEBI:17865"/>
        <dbReference type="ChEBI" id="CHEBI:35121"/>
        <dbReference type="ChEBI" id="CHEBI:57540"/>
        <dbReference type="ChEBI" id="CHEBI:57945"/>
        <dbReference type="EC" id="1.1.1.85"/>
    </reaction>
</comment>
<comment type="cofactor">
    <cofactor evidence="1">
        <name>Mg(2+)</name>
        <dbReference type="ChEBI" id="CHEBI:18420"/>
    </cofactor>
    <cofactor evidence="1">
        <name>Mn(2+)</name>
        <dbReference type="ChEBI" id="CHEBI:29035"/>
    </cofactor>
    <text evidence="1">Binds 1 Mg(2+) or Mn(2+) ion per subunit.</text>
</comment>
<comment type="pathway">
    <text>Amino-acid biosynthesis; L-leucine biosynthesis; L-leucine from 3-methyl-2-oxobutanoate: step 3/4.</text>
</comment>
<comment type="subunit">
    <text evidence="1">Homodimer.</text>
</comment>
<comment type="subcellular location">
    <subcellularLocation>
        <location>Cytoplasm</location>
    </subcellularLocation>
</comment>
<comment type="similarity">
    <text evidence="2">Belongs to the isocitrate and isopropylmalate dehydrogenases family.</text>
</comment>
<name>LEU3_NEUCR</name>
<proteinExistence type="inferred from homology"/>
<gene>
    <name type="primary">leu-1</name>
    <name type="ORF">NCU06232</name>
</gene>
<evidence type="ECO:0000250" key="1"/>
<evidence type="ECO:0000305" key="2"/>
<dbReference type="EC" id="1.1.1.85"/>
<dbReference type="EMBL" id="U01061">
    <property type="protein sequence ID" value="AAD10616.1"/>
    <property type="molecule type" value="Genomic_DNA"/>
</dbReference>
<dbReference type="EMBL" id="CM002238">
    <property type="protein sequence ID" value="EAA33847.1"/>
    <property type="molecule type" value="Genomic_DNA"/>
</dbReference>
<dbReference type="PIR" id="T46607">
    <property type="entry name" value="T46607"/>
</dbReference>
<dbReference type="RefSeq" id="XP_963083.1">
    <property type="nucleotide sequence ID" value="XM_957990.2"/>
</dbReference>
<dbReference type="SMR" id="P34738"/>
<dbReference type="FunCoup" id="P34738">
    <property type="interactions" value="784"/>
</dbReference>
<dbReference type="STRING" id="367110.P34738"/>
<dbReference type="PaxDb" id="5141-EFNCRP00000005960"/>
<dbReference type="EnsemblFungi" id="EAA33847">
    <property type="protein sequence ID" value="EAA33847"/>
    <property type="gene ID" value="NCU06232"/>
</dbReference>
<dbReference type="GeneID" id="3879238"/>
<dbReference type="KEGG" id="ncr:NCU06232"/>
<dbReference type="VEuPathDB" id="FungiDB:NCU06232"/>
<dbReference type="HOGENOM" id="CLU_031953_0_3_1"/>
<dbReference type="InParanoid" id="P34738"/>
<dbReference type="OMA" id="LWRETVQ"/>
<dbReference type="OrthoDB" id="419183at2759"/>
<dbReference type="UniPathway" id="UPA00048">
    <property type="reaction ID" value="UER00072"/>
</dbReference>
<dbReference type="Proteomes" id="UP000001805">
    <property type="component" value="Chromosome 3, Linkage Group III"/>
</dbReference>
<dbReference type="GO" id="GO:0005829">
    <property type="term" value="C:cytosol"/>
    <property type="evidence" value="ECO:0000318"/>
    <property type="project" value="GO_Central"/>
</dbReference>
<dbReference type="GO" id="GO:0003862">
    <property type="term" value="F:3-isopropylmalate dehydrogenase activity"/>
    <property type="evidence" value="ECO:0000318"/>
    <property type="project" value="GO_Central"/>
</dbReference>
<dbReference type="GO" id="GO:0000287">
    <property type="term" value="F:magnesium ion binding"/>
    <property type="evidence" value="ECO:0007669"/>
    <property type="project" value="InterPro"/>
</dbReference>
<dbReference type="GO" id="GO:0051287">
    <property type="term" value="F:NAD binding"/>
    <property type="evidence" value="ECO:0007669"/>
    <property type="project" value="InterPro"/>
</dbReference>
<dbReference type="GO" id="GO:0006097">
    <property type="term" value="P:glyoxylate cycle"/>
    <property type="evidence" value="ECO:0007669"/>
    <property type="project" value="EnsemblFungi"/>
</dbReference>
<dbReference type="GO" id="GO:0009098">
    <property type="term" value="P:L-leucine biosynthetic process"/>
    <property type="evidence" value="ECO:0000318"/>
    <property type="project" value="GO_Central"/>
</dbReference>
<dbReference type="FunFam" id="3.40.718.10:FF:000006">
    <property type="entry name" value="3-isopropylmalate dehydrogenase"/>
    <property type="match status" value="1"/>
</dbReference>
<dbReference type="Gene3D" id="3.40.718.10">
    <property type="entry name" value="Isopropylmalate Dehydrogenase"/>
    <property type="match status" value="1"/>
</dbReference>
<dbReference type="InterPro" id="IPR019818">
    <property type="entry name" value="IsoCit/isopropylmalate_DH_CS"/>
</dbReference>
<dbReference type="InterPro" id="IPR024084">
    <property type="entry name" value="IsoPropMal-DH-like_dom"/>
</dbReference>
<dbReference type="InterPro" id="IPR004429">
    <property type="entry name" value="Isopropylmalate_DH"/>
</dbReference>
<dbReference type="NCBIfam" id="TIGR00169">
    <property type="entry name" value="leuB"/>
    <property type="match status" value="1"/>
</dbReference>
<dbReference type="PANTHER" id="PTHR42979">
    <property type="entry name" value="3-ISOPROPYLMALATE DEHYDROGENASE"/>
    <property type="match status" value="1"/>
</dbReference>
<dbReference type="PANTHER" id="PTHR42979:SF1">
    <property type="entry name" value="3-ISOPROPYLMALATE DEHYDROGENASE"/>
    <property type="match status" value="1"/>
</dbReference>
<dbReference type="Pfam" id="PF00180">
    <property type="entry name" value="Iso_dh"/>
    <property type="match status" value="1"/>
</dbReference>
<dbReference type="SMART" id="SM01329">
    <property type="entry name" value="Iso_dh"/>
    <property type="match status" value="1"/>
</dbReference>
<dbReference type="SUPFAM" id="SSF53659">
    <property type="entry name" value="Isocitrate/Isopropylmalate dehydrogenase-like"/>
    <property type="match status" value="1"/>
</dbReference>
<dbReference type="PROSITE" id="PS00470">
    <property type="entry name" value="IDH_IMDH"/>
    <property type="match status" value="1"/>
</dbReference>
<keyword id="KW-0028">Amino-acid biosynthesis</keyword>
<keyword id="KW-0100">Branched-chain amino acid biosynthesis</keyword>
<keyword id="KW-0963">Cytoplasm</keyword>
<keyword id="KW-0432">Leucine biosynthesis</keyword>
<keyword id="KW-0460">Magnesium</keyword>
<keyword id="KW-0464">Manganese</keyword>
<keyword id="KW-0479">Metal-binding</keyword>
<keyword id="KW-0520">NAD</keyword>
<keyword id="KW-0560">Oxidoreductase</keyword>
<keyword id="KW-1185">Reference proteome</keyword>
<reference key="1">
    <citation type="journal article" date="1993" name="Gene">
        <title>The leu-1 gene of Neurospora crassa: nucleotide and deduced amino acid sequence comparisons.</title>
        <authorList>
            <person name="Li Q."/>
            <person name="Jarai G."/>
            <person name="Yaghmai B."/>
            <person name="Marzluf G.A."/>
        </authorList>
    </citation>
    <scope>NUCLEOTIDE SEQUENCE [GENOMIC DNA]</scope>
    <source>
        <strain>ATCC 24698 / 74-OR23-1A / CBS 708.71 / DSM 1257 / FGSC 987</strain>
    </source>
</reference>
<reference key="2">
    <citation type="journal article" date="2003" name="Nature">
        <title>The genome sequence of the filamentous fungus Neurospora crassa.</title>
        <authorList>
            <person name="Galagan J.E."/>
            <person name="Calvo S.E."/>
            <person name="Borkovich K.A."/>
            <person name="Selker E.U."/>
            <person name="Read N.D."/>
            <person name="Jaffe D.B."/>
            <person name="FitzHugh W."/>
            <person name="Ma L.-J."/>
            <person name="Smirnov S."/>
            <person name="Purcell S."/>
            <person name="Rehman B."/>
            <person name="Elkins T."/>
            <person name="Engels R."/>
            <person name="Wang S."/>
            <person name="Nielsen C.B."/>
            <person name="Butler J."/>
            <person name="Endrizzi M."/>
            <person name="Qui D."/>
            <person name="Ianakiev P."/>
            <person name="Bell-Pedersen D."/>
            <person name="Nelson M.A."/>
            <person name="Werner-Washburne M."/>
            <person name="Selitrennikoff C.P."/>
            <person name="Kinsey J.A."/>
            <person name="Braun E.L."/>
            <person name="Zelter A."/>
            <person name="Schulte U."/>
            <person name="Kothe G.O."/>
            <person name="Jedd G."/>
            <person name="Mewes H.-W."/>
            <person name="Staben C."/>
            <person name="Marcotte E."/>
            <person name="Greenberg D."/>
            <person name="Roy A."/>
            <person name="Foley K."/>
            <person name="Naylor J."/>
            <person name="Stange-Thomann N."/>
            <person name="Barrett R."/>
            <person name="Gnerre S."/>
            <person name="Kamal M."/>
            <person name="Kamvysselis M."/>
            <person name="Mauceli E.W."/>
            <person name="Bielke C."/>
            <person name="Rudd S."/>
            <person name="Frishman D."/>
            <person name="Krystofova S."/>
            <person name="Rasmussen C."/>
            <person name="Metzenberg R.L."/>
            <person name="Perkins D.D."/>
            <person name="Kroken S."/>
            <person name="Cogoni C."/>
            <person name="Macino G."/>
            <person name="Catcheside D.E.A."/>
            <person name="Li W."/>
            <person name="Pratt R.J."/>
            <person name="Osmani S.A."/>
            <person name="DeSouza C.P.C."/>
            <person name="Glass N.L."/>
            <person name="Orbach M.J."/>
            <person name="Berglund J.A."/>
            <person name="Voelker R."/>
            <person name="Yarden O."/>
            <person name="Plamann M."/>
            <person name="Seiler S."/>
            <person name="Dunlap J.C."/>
            <person name="Radford A."/>
            <person name="Aramayo R."/>
            <person name="Natvig D.O."/>
            <person name="Alex L.A."/>
            <person name="Mannhaupt G."/>
            <person name="Ebbole D.J."/>
            <person name="Freitag M."/>
            <person name="Paulsen I."/>
            <person name="Sachs M.S."/>
            <person name="Lander E.S."/>
            <person name="Nusbaum C."/>
            <person name="Birren B.W."/>
        </authorList>
    </citation>
    <scope>NUCLEOTIDE SEQUENCE [LARGE SCALE GENOMIC DNA]</scope>
    <source>
        <strain>ATCC 24698 / 74-OR23-1A / CBS 708.71 / DSM 1257 / FGSC 987</strain>
    </source>
</reference>
<protein>
    <recommendedName>
        <fullName>3-isopropylmalate dehydrogenase</fullName>
        <shortName>3-IPM-DH</shortName>
        <shortName>IMDH</shortName>
        <ecNumber>1.1.1.85</ecNumber>
    </recommendedName>
    <alternativeName>
        <fullName>Beta-IPM dehydrogenase</fullName>
    </alternativeName>
</protein>
<sequence length="368" mass="38661">MATHNIVVFGGDHCGPEVVLEAIKVLKAIETNSPSAGKFNLQNHLLGGASIDKHNDPLTDEALNAAKAADAVLLGAIGGPEWGTSSTVRPEQGLLKLRKELGTYGNLRPCNFASESLVDSSPLKAEVCRGTDFIVVRELTGGIYFGDRTEDDGSGYACDTEPYSRAEIVRIARLAGFLALAKNPPAKVWSLDKANVLATSRLWRKTVTDVISKEFPQLQLEHQLIDSAAMLLVKNPRALNGVVITSNLFGDIISDEASVIPGSIGLLPSASLGGIPDGKGKCNGIYEPIHGSAPDISGKGIVNPVGTILSVAMMLRYSLNLPKEADAVEAAVKAAIDNGTKTKDLGGNATTSDMGNAVVAELEKILKA</sequence>